<accession>Q8LPL6</accession>
<accession>C0Z243</accession>
<accession>C0Z347</accession>
<accession>Q9FNI4</accession>
<sequence length="1012" mass="112150">MTGMRGLSVFISDVRNCQNKEAERLRVDKELGNIRTCFKNEKVLTPYKKKKYVWKMLYIHMLGYDVDFGHMEAVSLISAPKYPEKQVGYIVTSCLLNENHDFLKLAINTVRNDIIGRNETFQCLALTLVGNIGGRDFAESLAPDVQKLLISSSCRPLVRKKAALCLLRLFRKNPDAVNVDGWADRMAQLLDERDLGVLTSSTSLLVALVSNNHEAYSSCLPKCVKILERLARNQDVPQEYTYYGIPSPWLQVKAMRALQYFPTIEDPSTRKALFEVLQRILMGTDVVKNVNKNNASHAVLFEALSLVMHLDAEKEMMSQCVALLGKFISVREPNIRYLGLENMTRMLMVTDVQDIIKKHQSQIITSLKDPDISIRRRALDLLYGMCDVSNAKDIVEELLQYLSTAEFSMREELSLKAAILAEKFAPDLSWYVDVILQLIDKAGDFVSDDIWFRVVQFVTNNEDLQPYAASKAREYLDKIAIHETMVKVSAYILGEYGHLLARQPGCSASELFSILHEKLPTISTPTIPILLSTYAKLLMHAQPPDPELQKKVWAVFKKYESCIDVEIQQRAVEYFELSKKGPAFMDVLAEMPKFPERQSSLIKKAENVEDTADQSAIKLRAQQQPSNAMVLADQQPVNGAPPPLKVPILSGSTDPESVARSLSHPNGTLSNIDPQTPSPDLLSDLLGPLAIEAPPGAVSNEQHGPVGAEGVPDEVDGSAIVPVEEQTNTVELIGNIAERFHALCLKDSGVLYEDPHIQIGIKAEWRGHHGRLVLFMGNKNTSPLTSVQALILPPAHLRLDLSPVPDTIPPRAQVQSPLEVMNIRPSRDVAVLDFSYKFGANVVSAKLRIPATLNKFLQPLQLTSEEFFPQWRAISGPPLKLQEVVRGVRPLALPEMANLFNSFHVTICPGLDPNPNNLVASTTFYSESTGAILCLARIETDPADRTQLRMTVGTGDPTLTFELKEFIKEQLITVPMGSRALVPAAGPAPPVAQPPSPAALADDPGAMLAGLL</sequence>
<reference key="1">
    <citation type="journal article" date="1997" name="DNA Res.">
        <title>Structural analysis of Arabidopsis thaliana chromosome 5. II. Sequence features of the regions of 1,044,062 bp covered by thirteen physically assigned P1 clones.</title>
        <authorList>
            <person name="Kotani H."/>
            <person name="Nakamura Y."/>
            <person name="Sato S."/>
            <person name="Kaneko T."/>
            <person name="Asamizu E."/>
            <person name="Miyajima N."/>
            <person name="Tabata S."/>
        </authorList>
    </citation>
    <scope>NUCLEOTIDE SEQUENCE [LARGE SCALE GENOMIC DNA]</scope>
    <source>
        <strain>cv. Columbia</strain>
    </source>
</reference>
<reference key="2">
    <citation type="journal article" date="2000" name="DNA Res.">
        <title>Structural analysis of Arabidopsis thaliana chromosome 5. X. Sequence features of the regions of 3,076,755 bp covered by sixty P1 and TAC clones.</title>
        <authorList>
            <person name="Sato S."/>
            <person name="Nakamura Y."/>
            <person name="Kaneko T."/>
            <person name="Katoh T."/>
            <person name="Asamizu E."/>
            <person name="Kotani H."/>
            <person name="Tabata S."/>
        </authorList>
    </citation>
    <scope>NUCLEOTIDE SEQUENCE [LARGE SCALE GENOMIC DNA]</scope>
    <source>
        <strain>cv. Columbia</strain>
    </source>
</reference>
<reference key="3">
    <citation type="journal article" date="2017" name="Plant J.">
        <title>Araport11: a complete reannotation of the Arabidopsis thaliana reference genome.</title>
        <authorList>
            <person name="Cheng C.Y."/>
            <person name="Krishnakumar V."/>
            <person name="Chan A.P."/>
            <person name="Thibaud-Nissen F."/>
            <person name="Schobel S."/>
            <person name="Town C.D."/>
        </authorList>
    </citation>
    <scope>GENOME REANNOTATION</scope>
    <source>
        <strain>cv. Columbia</strain>
    </source>
</reference>
<reference key="4">
    <citation type="journal article" date="2003" name="Science">
        <title>Empirical analysis of transcriptional activity in the Arabidopsis genome.</title>
        <authorList>
            <person name="Yamada K."/>
            <person name="Lim J."/>
            <person name="Dale J.M."/>
            <person name="Chen H."/>
            <person name="Shinn P."/>
            <person name="Palm C.J."/>
            <person name="Southwick A.M."/>
            <person name="Wu H.C."/>
            <person name="Kim C.J."/>
            <person name="Nguyen M."/>
            <person name="Pham P.K."/>
            <person name="Cheuk R.F."/>
            <person name="Karlin-Newmann G."/>
            <person name="Liu S.X."/>
            <person name="Lam B."/>
            <person name="Sakano H."/>
            <person name="Wu T."/>
            <person name="Yu G."/>
            <person name="Miranda M."/>
            <person name="Quach H.L."/>
            <person name="Tripp M."/>
            <person name="Chang C.H."/>
            <person name="Lee J.M."/>
            <person name="Toriumi M.J."/>
            <person name="Chan M.M."/>
            <person name="Tang C.C."/>
            <person name="Onodera C.S."/>
            <person name="Deng J.M."/>
            <person name="Akiyama K."/>
            <person name="Ansari Y."/>
            <person name="Arakawa T."/>
            <person name="Banh J."/>
            <person name="Banno F."/>
            <person name="Bowser L."/>
            <person name="Brooks S.Y."/>
            <person name="Carninci P."/>
            <person name="Chao Q."/>
            <person name="Choy N."/>
            <person name="Enju A."/>
            <person name="Goldsmith A.D."/>
            <person name="Gurjal M."/>
            <person name="Hansen N.F."/>
            <person name="Hayashizaki Y."/>
            <person name="Johnson-Hopson C."/>
            <person name="Hsuan V.W."/>
            <person name="Iida K."/>
            <person name="Karnes M."/>
            <person name="Khan S."/>
            <person name="Koesema E."/>
            <person name="Ishida J."/>
            <person name="Jiang P.X."/>
            <person name="Jones T."/>
            <person name="Kawai J."/>
            <person name="Kamiya A."/>
            <person name="Meyers C."/>
            <person name="Nakajima M."/>
            <person name="Narusaka M."/>
            <person name="Seki M."/>
            <person name="Sakurai T."/>
            <person name="Satou M."/>
            <person name="Tamse R."/>
            <person name="Vaysberg M."/>
            <person name="Wallender E.K."/>
            <person name="Wong C."/>
            <person name="Yamamura Y."/>
            <person name="Yuan S."/>
            <person name="Shinozaki K."/>
            <person name="Davis R.W."/>
            <person name="Theologis A."/>
            <person name="Ecker J.R."/>
        </authorList>
    </citation>
    <scope>NUCLEOTIDE SEQUENCE [LARGE SCALE MRNA] (ISOFORM 1)</scope>
    <source>
        <strain>cv. Columbia</strain>
    </source>
</reference>
<reference key="5">
    <citation type="journal article" date="2009" name="DNA Res.">
        <title>Analysis of multiple occurrences of alternative splicing events in Arabidopsis thaliana using novel sequenced full-length cDNAs.</title>
        <authorList>
            <person name="Iida K."/>
            <person name="Fukami-Kobayashi K."/>
            <person name="Toyoda A."/>
            <person name="Sakaki Y."/>
            <person name="Kobayashi M."/>
            <person name="Seki M."/>
            <person name="Shinozaki K."/>
        </authorList>
    </citation>
    <scope>NUCLEOTIDE SEQUENCE [LARGE SCALE MRNA] (ISOFORMS 2 AND 3)</scope>
    <source>
        <strain>cv. Columbia</strain>
        <tissue>Rosette leaf</tissue>
    </source>
</reference>
<reference key="6">
    <citation type="journal article" date="2001" name="Mol. Biol. Cell">
        <title>Adaptins: the final recount.</title>
        <authorList>
            <person name="Boehm M."/>
            <person name="Bonifacino J.S."/>
        </authorList>
    </citation>
    <scope>GENE FAMILY</scope>
    <scope>REVIEW</scope>
</reference>
<reference key="7">
    <citation type="journal article" date="2007" name="Plant Physiol.">
        <title>EpsinR2 interacts with clathrin, adaptor protein-3, AtVTI12, and phosphatidylinositol-3-phosphate. Implications for EpsinR2 function in protein trafficking in plant cells.</title>
        <authorList>
            <person name="Lee G.-J."/>
            <person name="Kim H."/>
            <person name="Kang H."/>
            <person name="Jang M."/>
            <person name="Lee D.W."/>
            <person name="Lee S."/>
            <person name="Hwang I."/>
        </authorList>
    </citation>
    <scope>INTERACTION WITH EPSIN2</scope>
</reference>
<evidence type="ECO:0000250" key="1"/>
<evidence type="ECO:0000256" key="2">
    <source>
        <dbReference type="SAM" id="MobiDB-lite"/>
    </source>
</evidence>
<evidence type="ECO:0000303" key="3">
    <source>
    </source>
</evidence>
<evidence type="ECO:0000305" key="4"/>
<keyword id="KW-0025">Alternative splicing</keyword>
<keyword id="KW-0168">Coated pit</keyword>
<keyword id="KW-0254">Endocytosis</keyword>
<keyword id="KW-0446">Lipid-binding</keyword>
<keyword id="KW-0472">Membrane</keyword>
<keyword id="KW-0653">Protein transport</keyword>
<keyword id="KW-1185">Reference proteome</keyword>
<keyword id="KW-0677">Repeat</keyword>
<keyword id="KW-0813">Transport</keyword>
<comment type="function">
    <text evidence="1">Subunit of the adaptor protein complex 2 (AP-2). Adaptor protein complexes function in protein transport via transport vesicles in different membrane traffic pathways. Adaptor protein complexes are vesicle coat components and appear to be involved in cargo selection and vesicle formation. AP-2 is involved in clathrin-dependent endocytosis in which cargo proteins are incorporated into vesicles surrounded by clathrin (clathrin-coated vesicles, CCVs) which are destined for fusion with the early endosome. The complex binds polyphosphoinositides (By similarity).</text>
</comment>
<comment type="subunit">
    <text evidence="1">Adaptor protein complex 2 (AP-2) is a heterotetramer composed of two large adaptins (alpha-type and beta-type subunits), a medium adaptin (mu-type subunit) and a small adaptin (sigma-type subunit) (By similarity). Binds to EPSIN2.</text>
</comment>
<comment type="subcellular location">
    <subcellularLocation>
        <location evidence="1">Membrane</location>
        <location evidence="1">Coated pit</location>
        <topology evidence="1">Peripheral membrane protein</topology>
        <orientation evidence="1">Cytoplasmic side</orientation>
    </subcellularLocation>
    <text evidence="1">Component of the coat surrounding the cytoplasmic face of coated vesicles in the plasma membrane.</text>
</comment>
<comment type="alternative products">
    <event type="alternative splicing"/>
    <isoform>
        <id>Q8LPL6-1</id>
        <name>1</name>
        <sequence type="displayed"/>
    </isoform>
    <isoform>
        <id>Q8LPL6-2</id>
        <name>2</name>
        <sequence type="described" ref="VSP_039697"/>
    </isoform>
    <isoform>
        <id>Q8LPL6-3</id>
        <name>3</name>
        <sequence type="described" ref="VSP_039697 VSP_039698 VSP_039699"/>
    </isoform>
</comment>
<comment type="similarity">
    <text evidence="4">Belongs to the adaptor complexes large subunit family.</text>
</comment>
<comment type="sequence caution" evidence="4">
    <conflict type="erroneous gene model prediction">
        <sequence resource="EMBL-CDS" id="BAB11683"/>
    </conflict>
</comment>
<proteinExistence type="evidence at protein level"/>
<feature type="chain" id="PRO_0000397846" description="AP-2 complex subunit alpha-1">
    <location>
        <begin position="1"/>
        <end position="1012"/>
    </location>
</feature>
<feature type="repeat" description="HEAT 1">
    <location>
        <begin position="254"/>
        <end position="289"/>
    </location>
</feature>
<feature type="repeat" description="HEAT 2">
    <location>
        <begin position="354"/>
        <end position="391"/>
    </location>
</feature>
<feature type="repeat" description="HEAT 3">
    <location>
        <begin position="393"/>
        <end position="430"/>
    </location>
</feature>
<feature type="repeat" description="HEAT 4">
    <location>
        <begin position="525"/>
        <end position="565"/>
    </location>
</feature>
<feature type="domain" description="GAE">
    <location>
        <begin position="742"/>
        <end position="841"/>
    </location>
</feature>
<feature type="region of interest" description="Disordered" evidence="2">
    <location>
        <begin position="652"/>
        <end position="678"/>
    </location>
</feature>
<feature type="compositionally biased region" description="Polar residues" evidence="2">
    <location>
        <begin position="663"/>
        <end position="675"/>
    </location>
</feature>
<feature type="splice variant" id="VSP_039697" description="In isoform 2 and isoform 3." evidence="3">
    <original>T</original>
    <variation>TQ</variation>
    <location>
        <position position="653"/>
    </location>
</feature>
<feature type="splice variant" id="VSP_039698" description="In isoform 3." evidence="3">
    <original>DPNPNNLVASTTFYSESTGA</original>
    <variation>VSICLRSHSSCLLHTCILQT</variation>
    <location>
        <begin position="912"/>
        <end position="931"/>
    </location>
</feature>
<feature type="splice variant" id="VSP_039699" description="In isoform 3." evidence="3">
    <location>
        <begin position="932"/>
        <end position="1012"/>
    </location>
</feature>
<feature type="sequence conflict" description="In Ref. 5; BAH56772." evidence="4" ref="5">
    <original>E</original>
    <variation>G</variation>
    <location>
        <position position="609"/>
    </location>
</feature>
<feature type="sequence conflict" description="In Ref. 5; BAH57126." evidence="4" ref="5">
    <original>P</original>
    <variation>L</variation>
    <location>
        <position position="894"/>
    </location>
</feature>
<name>AP2A1_ARATH</name>
<dbReference type="EMBL" id="AB006699">
    <property type="protein sequence ID" value="BAB11683.1"/>
    <property type="status" value="ALT_SEQ"/>
    <property type="molecule type" value="Genomic_DNA"/>
</dbReference>
<dbReference type="EMBL" id="AB024030">
    <property type="protein sequence ID" value="BAB11683.1"/>
    <property type="status" value="JOINED"/>
    <property type="molecule type" value="Genomic_DNA"/>
</dbReference>
<dbReference type="EMBL" id="CP002688">
    <property type="protein sequence ID" value="AED93072.1"/>
    <property type="molecule type" value="Genomic_DNA"/>
</dbReference>
<dbReference type="EMBL" id="CP002688">
    <property type="protein sequence ID" value="AED93073.1"/>
    <property type="molecule type" value="Genomic_DNA"/>
</dbReference>
<dbReference type="EMBL" id="CP002688">
    <property type="protein sequence ID" value="AED93074.1"/>
    <property type="molecule type" value="Genomic_DNA"/>
</dbReference>
<dbReference type="EMBL" id="CP002688">
    <property type="protein sequence ID" value="ANM69277.1"/>
    <property type="molecule type" value="Genomic_DNA"/>
</dbReference>
<dbReference type="EMBL" id="CP002688">
    <property type="protein sequence ID" value="ANM69278.1"/>
    <property type="molecule type" value="Genomic_DNA"/>
</dbReference>
<dbReference type="EMBL" id="CP002688">
    <property type="protein sequence ID" value="ANM69279.1"/>
    <property type="molecule type" value="Genomic_DNA"/>
</dbReference>
<dbReference type="EMBL" id="AY099568">
    <property type="protein sequence ID" value="AAM20420.1"/>
    <property type="molecule type" value="mRNA"/>
</dbReference>
<dbReference type="EMBL" id="AK318657">
    <property type="protein sequence ID" value="BAH56772.1"/>
    <property type="molecule type" value="mRNA"/>
</dbReference>
<dbReference type="EMBL" id="AK319011">
    <property type="protein sequence ID" value="BAH57126.1"/>
    <property type="molecule type" value="mRNA"/>
</dbReference>
<dbReference type="RefSeq" id="NP_001330969.1">
    <molecule id="Q8LPL6-1"/>
    <property type="nucleotide sequence ID" value="NM_001343764.1"/>
</dbReference>
<dbReference type="RefSeq" id="NP_001330970.1">
    <molecule id="Q8LPL6-1"/>
    <property type="nucleotide sequence ID" value="NM_001343762.1"/>
</dbReference>
<dbReference type="RefSeq" id="NP_001330971.1">
    <molecule id="Q8LPL6-1"/>
    <property type="nucleotide sequence ID" value="NM_001343763.1"/>
</dbReference>
<dbReference type="RefSeq" id="NP_197669.1">
    <molecule id="Q8LPL6-1"/>
    <property type="nucleotide sequence ID" value="NM_122183.3"/>
</dbReference>
<dbReference type="RefSeq" id="NP_851057.1">
    <molecule id="Q8LPL6-1"/>
    <property type="nucleotide sequence ID" value="NM_180726.2"/>
</dbReference>
<dbReference type="RefSeq" id="NP_851058.1">
    <molecule id="Q8LPL6-1"/>
    <property type="nucleotide sequence ID" value="NM_180727.2"/>
</dbReference>
<dbReference type="SMR" id="Q8LPL6"/>
<dbReference type="BioGRID" id="17615">
    <property type="interactions" value="13"/>
</dbReference>
<dbReference type="FunCoup" id="Q8LPL6">
    <property type="interactions" value="4568"/>
</dbReference>
<dbReference type="IntAct" id="Q8LPL6">
    <property type="interactions" value="3"/>
</dbReference>
<dbReference type="STRING" id="3702.Q8LPL6"/>
<dbReference type="iPTMnet" id="Q8LPL6"/>
<dbReference type="PaxDb" id="3702-AT5G22770.1"/>
<dbReference type="ProteomicsDB" id="244991">
    <molecule id="Q8LPL6-1"/>
</dbReference>
<dbReference type="EnsemblPlants" id="AT5G22770.1">
    <molecule id="Q8LPL6-1"/>
    <property type="protein sequence ID" value="AT5G22770.1"/>
    <property type="gene ID" value="AT5G22770"/>
</dbReference>
<dbReference type="EnsemblPlants" id="AT5G22770.2">
    <molecule id="Q8LPL6-1"/>
    <property type="protein sequence ID" value="AT5G22770.2"/>
    <property type="gene ID" value="AT5G22770"/>
</dbReference>
<dbReference type="EnsemblPlants" id="AT5G22770.3">
    <molecule id="Q8LPL6-1"/>
    <property type="protein sequence ID" value="AT5G22770.3"/>
    <property type="gene ID" value="AT5G22770"/>
</dbReference>
<dbReference type="EnsemblPlants" id="AT5G22770.4">
    <molecule id="Q8LPL6-1"/>
    <property type="protein sequence ID" value="AT5G22770.4"/>
    <property type="gene ID" value="AT5G22770"/>
</dbReference>
<dbReference type="EnsemblPlants" id="AT5G22770.5">
    <molecule id="Q8LPL6-1"/>
    <property type="protein sequence ID" value="AT5G22770.5"/>
    <property type="gene ID" value="AT5G22770"/>
</dbReference>
<dbReference type="EnsemblPlants" id="AT5G22770.6">
    <molecule id="Q8LPL6-1"/>
    <property type="protein sequence ID" value="AT5G22770.6"/>
    <property type="gene ID" value="AT5G22770"/>
</dbReference>
<dbReference type="GeneID" id="832340"/>
<dbReference type="Gramene" id="AT5G22770.1">
    <molecule id="Q8LPL6-1"/>
    <property type="protein sequence ID" value="AT5G22770.1"/>
    <property type="gene ID" value="AT5G22770"/>
</dbReference>
<dbReference type="Gramene" id="AT5G22770.2">
    <molecule id="Q8LPL6-1"/>
    <property type="protein sequence ID" value="AT5G22770.2"/>
    <property type="gene ID" value="AT5G22770"/>
</dbReference>
<dbReference type="Gramene" id="AT5G22770.3">
    <molecule id="Q8LPL6-1"/>
    <property type="protein sequence ID" value="AT5G22770.3"/>
    <property type="gene ID" value="AT5G22770"/>
</dbReference>
<dbReference type="Gramene" id="AT5G22770.4">
    <molecule id="Q8LPL6-1"/>
    <property type="protein sequence ID" value="AT5G22770.4"/>
    <property type="gene ID" value="AT5G22770"/>
</dbReference>
<dbReference type="Gramene" id="AT5G22770.5">
    <molecule id="Q8LPL6-1"/>
    <property type="protein sequence ID" value="AT5G22770.5"/>
    <property type="gene ID" value="AT5G22770"/>
</dbReference>
<dbReference type="Gramene" id="AT5G22770.6">
    <molecule id="Q8LPL6-1"/>
    <property type="protein sequence ID" value="AT5G22770.6"/>
    <property type="gene ID" value="AT5G22770"/>
</dbReference>
<dbReference type="KEGG" id="ath:AT5G22770"/>
<dbReference type="Araport" id="AT5G22770"/>
<dbReference type="TAIR" id="AT5G22770">
    <property type="gene designation" value="ALPHA-ADR"/>
</dbReference>
<dbReference type="eggNOG" id="KOG1077">
    <property type="taxonomic scope" value="Eukaryota"/>
</dbReference>
<dbReference type="HOGENOM" id="CLU_003824_1_0_1"/>
<dbReference type="InParanoid" id="Q8LPL6"/>
<dbReference type="OMA" id="ILYEDQY"/>
<dbReference type="PhylomeDB" id="Q8LPL6"/>
<dbReference type="PRO" id="PR:Q8LPL6"/>
<dbReference type="Proteomes" id="UP000006548">
    <property type="component" value="Chromosome 5"/>
</dbReference>
<dbReference type="ExpressionAtlas" id="Q8LPL6">
    <property type="expression patterns" value="baseline and differential"/>
</dbReference>
<dbReference type="GO" id="GO:0030122">
    <property type="term" value="C:AP-2 adaptor complex"/>
    <property type="evidence" value="ECO:0007669"/>
    <property type="project" value="InterPro"/>
</dbReference>
<dbReference type="GO" id="GO:0009536">
    <property type="term" value="C:plastid"/>
    <property type="evidence" value="ECO:0007005"/>
    <property type="project" value="TAIR"/>
</dbReference>
<dbReference type="GO" id="GO:0035615">
    <property type="term" value="F:clathrin adaptor activity"/>
    <property type="evidence" value="ECO:0007669"/>
    <property type="project" value="InterPro"/>
</dbReference>
<dbReference type="GO" id="GO:0008289">
    <property type="term" value="F:lipid binding"/>
    <property type="evidence" value="ECO:0007669"/>
    <property type="project" value="UniProtKB-KW"/>
</dbReference>
<dbReference type="GO" id="GO:0072583">
    <property type="term" value="P:clathrin-dependent endocytosis"/>
    <property type="evidence" value="ECO:0007669"/>
    <property type="project" value="InterPro"/>
</dbReference>
<dbReference type="GO" id="GO:0006886">
    <property type="term" value="P:intracellular protein transport"/>
    <property type="evidence" value="ECO:0007669"/>
    <property type="project" value="InterPro"/>
</dbReference>
<dbReference type="FunFam" id="1.25.10.10:FF:000020">
    <property type="entry name" value="AP-2 complex subunit alpha"/>
    <property type="match status" value="1"/>
</dbReference>
<dbReference type="Gene3D" id="2.60.40.1230">
    <property type="match status" value="1"/>
</dbReference>
<dbReference type="Gene3D" id="1.25.10.10">
    <property type="entry name" value="Leucine-rich Repeat Variant"/>
    <property type="match status" value="1"/>
</dbReference>
<dbReference type="Gene3D" id="3.30.310.10">
    <property type="entry name" value="TATA-Binding Protein"/>
    <property type="match status" value="1"/>
</dbReference>
<dbReference type="InterPro" id="IPR050840">
    <property type="entry name" value="Adaptor_Complx_Large_Subunit"/>
</dbReference>
<dbReference type="InterPro" id="IPR017104">
    <property type="entry name" value="AP2_complex_asu"/>
</dbReference>
<dbReference type="InterPro" id="IPR011989">
    <property type="entry name" value="ARM-like"/>
</dbReference>
<dbReference type="InterPro" id="IPR016024">
    <property type="entry name" value="ARM-type_fold"/>
</dbReference>
<dbReference type="InterPro" id="IPR002553">
    <property type="entry name" value="Clathrin/coatomer_adapt-like_N"/>
</dbReference>
<dbReference type="InterPro" id="IPR003164">
    <property type="entry name" value="Clathrin_a-adaptin_app_sub_C"/>
</dbReference>
<dbReference type="InterPro" id="IPR008152">
    <property type="entry name" value="Clathrin_a/b/g-adaptin_app_Ig"/>
</dbReference>
<dbReference type="InterPro" id="IPR013041">
    <property type="entry name" value="Clathrin_app_Ig-like_sf"/>
</dbReference>
<dbReference type="InterPro" id="IPR009028">
    <property type="entry name" value="Coatomer/calthrin_app_sub_C"/>
</dbReference>
<dbReference type="InterPro" id="IPR012295">
    <property type="entry name" value="TBP_dom_sf"/>
</dbReference>
<dbReference type="PANTHER" id="PTHR22780">
    <property type="entry name" value="ADAPTIN, ALPHA/GAMMA/EPSILON"/>
    <property type="match status" value="1"/>
</dbReference>
<dbReference type="Pfam" id="PF01602">
    <property type="entry name" value="Adaptin_N"/>
    <property type="match status" value="1"/>
</dbReference>
<dbReference type="Pfam" id="PF02296">
    <property type="entry name" value="Alpha_adaptin_C"/>
    <property type="match status" value="1"/>
</dbReference>
<dbReference type="Pfam" id="PF02883">
    <property type="entry name" value="Alpha_adaptinC2"/>
    <property type="match status" value="1"/>
</dbReference>
<dbReference type="PIRSF" id="PIRSF037091">
    <property type="entry name" value="AP2_complex_alpha"/>
    <property type="match status" value="1"/>
</dbReference>
<dbReference type="SMART" id="SM00809">
    <property type="entry name" value="Alpha_adaptinC2"/>
    <property type="match status" value="1"/>
</dbReference>
<dbReference type="SUPFAM" id="SSF48371">
    <property type="entry name" value="ARM repeat"/>
    <property type="match status" value="1"/>
</dbReference>
<dbReference type="SUPFAM" id="SSF49348">
    <property type="entry name" value="Clathrin adaptor appendage domain"/>
    <property type="match status" value="1"/>
</dbReference>
<dbReference type="SUPFAM" id="SSF55711">
    <property type="entry name" value="Subdomain of clathrin and coatomer appendage domain"/>
    <property type="match status" value="1"/>
</dbReference>
<protein>
    <recommendedName>
        <fullName>AP-2 complex subunit alpha-1</fullName>
    </recommendedName>
    <alternativeName>
        <fullName>Adaptor protein complex AP-2 subunit alpha-1</fullName>
    </alternativeName>
    <alternativeName>
        <fullName>Adaptor-related protein complex 2 subunit alpha-1</fullName>
    </alternativeName>
    <alternativeName>
        <fullName>Alpha-adaptin 1</fullName>
    </alternativeName>
    <alternativeName>
        <fullName>Clathrin assembly protein complex 2 alpha large chain 1</fullName>
        <shortName>At-a-Ad</shortName>
        <shortName>At-alpha-Ad</shortName>
    </alternativeName>
</protein>
<gene>
    <name type="primary">ALPHA-ADR</name>
    <name type="ordered locus">At5g22770</name>
    <name type="ORF">MDJ22.19</name>
</gene>
<organism>
    <name type="scientific">Arabidopsis thaliana</name>
    <name type="common">Mouse-ear cress</name>
    <dbReference type="NCBI Taxonomy" id="3702"/>
    <lineage>
        <taxon>Eukaryota</taxon>
        <taxon>Viridiplantae</taxon>
        <taxon>Streptophyta</taxon>
        <taxon>Embryophyta</taxon>
        <taxon>Tracheophyta</taxon>
        <taxon>Spermatophyta</taxon>
        <taxon>Magnoliopsida</taxon>
        <taxon>eudicotyledons</taxon>
        <taxon>Gunneridae</taxon>
        <taxon>Pentapetalae</taxon>
        <taxon>rosids</taxon>
        <taxon>malvids</taxon>
        <taxon>Brassicales</taxon>
        <taxon>Brassicaceae</taxon>
        <taxon>Camelineae</taxon>
        <taxon>Arabidopsis</taxon>
    </lineage>
</organism>